<protein>
    <recommendedName>
        <fullName>Scavenger receptor class F member 1</fullName>
    </recommendedName>
    <alternativeName>
        <fullName>Acetyl LDL receptor</fullName>
    </alternativeName>
    <alternativeName>
        <fullName>Scavenger receptor expressed by endothelial cells 1 protein</fullName>
        <shortName>SREC-I</shortName>
    </alternativeName>
</protein>
<gene>
    <name type="primary">Scarf1</name>
    <name type="synonym">Kiaa0149</name>
    <name type="synonym">Srec</name>
</gene>
<name>SREC_MOUSE</name>
<evidence type="ECO:0000250" key="1"/>
<evidence type="ECO:0000250" key="2">
    <source>
        <dbReference type="UniProtKB" id="Q14162"/>
    </source>
</evidence>
<evidence type="ECO:0000255" key="3"/>
<evidence type="ECO:0000255" key="4">
    <source>
        <dbReference type="PROSITE-ProRule" id="PRU00076"/>
    </source>
</evidence>
<evidence type="ECO:0000256" key="5">
    <source>
        <dbReference type="SAM" id="MobiDB-lite"/>
    </source>
</evidence>
<evidence type="ECO:0000269" key="6">
    <source>
    </source>
</evidence>
<evidence type="ECO:0000305" key="7"/>
<evidence type="ECO:0007744" key="8">
    <source>
    </source>
</evidence>
<keyword id="KW-0130">Cell adhesion</keyword>
<keyword id="KW-1015">Disulfide bond</keyword>
<keyword id="KW-0245">EGF-like domain</keyword>
<keyword id="KW-0325">Glycoprotein</keyword>
<keyword id="KW-0472">Membrane</keyword>
<keyword id="KW-0597">Phosphoprotein</keyword>
<keyword id="KW-0675">Receptor</keyword>
<keyword id="KW-1185">Reference proteome</keyword>
<keyword id="KW-0677">Repeat</keyword>
<keyword id="KW-0732">Signal</keyword>
<keyword id="KW-0812">Transmembrane</keyword>
<keyword id="KW-1133">Transmembrane helix</keyword>
<dbReference type="EMBL" id="AK220215">
    <property type="protein sequence ID" value="BAD90140.1"/>
    <property type="status" value="ALT_INIT"/>
    <property type="molecule type" value="mRNA"/>
</dbReference>
<dbReference type="EMBL" id="AK133477">
    <property type="protein sequence ID" value="BAE21676.1"/>
    <property type="molecule type" value="mRNA"/>
</dbReference>
<dbReference type="EMBL" id="AL591496">
    <property type="status" value="NOT_ANNOTATED_CDS"/>
    <property type="molecule type" value="Genomic_DNA"/>
</dbReference>
<dbReference type="CCDS" id="CCDS25050.1"/>
<dbReference type="RefSeq" id="NP_001004157.2">
    <property type="nucleotide sequence ID" value="NM_001004157.2"/>
</dbReference>
<dbReference type="SMR" id="Q5ND28"/>
<dbReference type="BioGRID" id="237612">
    <property type="interactions" value="5"/>
</dbReference>
<dbReference type="FunCoup" id="Q5ND28">
    <property type="interactions" value="1125"/>
</dbReference>
<dbReference type="STRING" id="10090.ENSMUSP00000044248"/>
<dbReference type="GlyCosmos" id="Q5ND28">
    <property type="glycosylation" value="1 site, No reported glycans"/>
</dbReference>
<dbReference type="GlyGen" id="Q5ND28">
    <property type="glycosylation" value="1 site"/>
</dbReference>
<dbReference type="iPTMnet" id="Q5ND28"/>
<dbReference type="PhosphoSitePlus" id="Q5ND28"/>
<dbReference type="SwissPalm" id="Q5ND28"/>
<dbReference type="PaxDb" id="10090-ENSMUSP00000044248"/>
<dbReference type="ProteomicsDB" id="254559"/>
<dbReference type="Antibodypedia" id="22736">
    <property type="antibodies" value="145 antibodies from 34 providers"/>
</dbReference>
<dbReference type="DNASU" id="380713"/>
<dbReference type="Ensembl" id="ENSMUST00000042808.13">
    <property type="protein sequence ID" value="ENSMUSP00000044248.7"/>
    <property type="gene ID" value="ENSMUSG00000038188.18"/>
</dbReference>
<dbReference type="GeneID" id="380713"/>
<dbReference type="KEGG" id="mmu:380713"/>
<dbReference type="UCSC" id="uc007kea.1">
    <property type="organism name" value="mouse"/>
</dbReference>
<dbReference type="AGR" id="MGI:2449455"/>
<dbReference type="CTD" id="8578"/>
<dbReference type="MGI" id="MGI:2449455">
    <property type="gene designation" value="Scarf1"/>
</dbReference>
<dbReference type="VEuPathDB" id="HostDB:ENSMUSG00000038188"/>
<dbReference type="eggNOG" id="KOG1218">
    <property type="taxonomic scope" value="Eukaryota"/>
</dbReference>
<dbReference type="GeneTree" id="ENSGT00950000183101"/>
<dbReference type="HOGENOM" id="CLU_017821_0_0_1"/>
<dbReference type="InParanoid" id="Q5ND28"/>
<dbReference type="OMA" id="CFHGNCH"/>
<dbReference type="OrthoDB" id="6130531at2759"/>
<dbReference type="PhylomeDB" id="Q5ND28"/>
<dbReference type="TreeFam" id="TF332598"/>
<dbReference type="BioGRID-ORCS" id="380713">
    <property type="hits" value="5 hits in 78 CRISPR screens"/>
</dbReference>
<dbReference type="ChiTaRS" id="Scarf1">
    <property type="organism name" value="mouse"/>
</dbReference>
<dbReference type="PRO" id="PR:Q5ND28"/>
<dbReference type="Proteomes" id="UP000000589">
    <property type="component" value="Chromosome 11"/>
</dbReference>
<dbReference type="RNAct" id="Q5ND28">
    <property type="molecule type" value="protein"/>
</dbReference>
<dbReference type="Bgee" id="ENSMUSG00000038188">
    <property type="expression patterns" value="Expressed in brain blood vessel and 120 other cell types or tissues"/>
</dbReference>
<dbReference type="ExpressionAtlas" id="Q5ND28">
    <property type="expression patterns" value="baseline and differential"/>
</dbReference>
<dbReference type="GO" id="GO:0005886">
    <property type="term" value="C:plasma membrane"/>
    <property type="evidence" value="ECO:0000304"/>
    <property type="project" value="Reactome"/>
</dbReference>
<dbReference type="GO" id="GO:0030169">
    <property type="term" value="F:low-density lipoprotein particle binding"/>
    <property type="evidence" value="ECO:0007669"/>
    <property type="project" value="Ensembl"/>
</dbReference>
<dbReference type="GO" id="GO:0005044">
    <property type="term" value="F:scavenger receptor activity"/>
    <property type="evidence" value="ECO:0007669"/>
    <property type="project" value="Ensembl"/>
</dbReference>
<dbReference type="GO" id="GO:0007155">
    <property type="term" value="P:cell adhesion"/>
    <property type="evidence" value="ECO:0007669"/>
    <property type="project" value="UniProtKB-KW"/>
</dbReference>
<dbReference type="GO" id="GO:0016358">
    <property type="term" value="P:dendrite development"/>
    <property type="evidence" value="ECO:0000314"/>
    <property type="project" value="MGI"/>
</dbReference>
<dbReference type="GO" id="GO:0016322">
    <property type="term" value="P:neuron remodeling"/>
    <property type="evidence" value="ECO:0000315"/>
    <property type="project" value="UniProtKB"/>
</dbReference>
<dbReference type="GO" id="GO:0048680">
    <property type="term" value="P:positive regulation of axon regeneration"/>
    <property type="evidence" value="ECO:0000315"/>
    <property type="project" value="UniProtKB"/>
</dbReference>
<dbReference type="GO" id="GO:0010976">
    <property type="term" value="P:positive regulation of neuron projection development"/>
    <property type="evidence" value="ECO:0000314"/>
    <property type="project" value="UniProtKB"/>
</dbReference>
<dbReference type="CDD" id="cd00055">
    <property type="entry name" value="EGF_Lam"/>
    <property type="match status" value="1"/>
</dbReference>
<dbReference type="FunFam" id="2.170.300.10:FF:000048">
    <property type="entry name" value="scavenger receptor class F member 1 isoform X4"/>
    <property type="match status" value="1"/>
</dbReference>
<dbReference type="FunFam" id="2.170.300.10:FF:000010">
    <property type="entry name" value="Scavenger receptor class F member 2"/>
    <property type="match status" value="1"/>
</dbReference>
<dbReference type="FunFam" id="2.10.25.10:FF:000691">
    <property type="entry name" value="Scavenger receptor class F, member 1"/>
    <property type="match status" value="1"/>
</dbReference>
<dbReference type="FunFam" id="2.170.300.10:FF:000013">
    <property type="entry name" value="Scavenger receptor class F, member 2"/>
    <property type="match status" value="1"/>
</dbReference>
<dbReference type="Gene3D" id="2.10.25.10">
    <property type="entry name" value="Laminin"/>
    <property type="match status" value="2"/>
</dbReference>
<dbReference type="Gene3D" id="2.170.300.10">
    <property type="entry name" value="Tie2 ligand-binding domain superfamily"/>
    <property type="match status" value="2"/>
</dbReference>
<dbReference type="InterPro" id="IPR000742">
    <property type="entry name" value="EGF-like_dom"/>
</dbReference>
<dbReference type="InterPro" id="IPR009030">
    <property type="entry name" value="Growth_fac_rcpt_cys_sf"/>
</dbReference>
<dbReference type="InterPro" id="IPR002049">
    <property type="entry name" value="LE_dom"/>
</dbReference>
<dbReference type="InterPro" id="IPR042635">
    <property type="entry name" value="MEGF10/SREC1/2-like"/>
</dbReference>
<dbReference type="PANTHER" id="PTHR24043">
    <property type="entry name" value="SCAVENGER RECEPTOR CLASS F"/>
    <property type="match status" value="1"/>
</dbReference>
<dbReference type="PANTHER" id="PTHR24043:SF0">
    <property type="entry name" value="SCAVENGER RECEPTOR CLASS F MEMBER 1"/>
    <property type="match status" value="1"/>
</dbReference>
<dbReference type="Pfam" id="PF00053">
    <property type="entry name" value="EGF_laminin"/>
    <property type="match status" value="2"/>
</dbReference>
<dbReference type="PRINTS" id="PR00011">
    <property type="entry name" value="EGFLAMININ"/>
</dbReference>
<dbReference type="SMART" id="SM00181">
    <property type="entry name" value="EGF"/>
    <property type="match status" value="8"/>
</dbReference>
<dbReference type="SMART" id="SM00180">
    <property type="entry name" value="EGF_Lam"/>
    <property type="match status" value="3"/>
</dbReference>
<dbReference type="SUPFAM" id="SSF57184">
    <property type="entry name" value="Growth factor receptor domain"/>
    <property type="match status" value="1"/>
</dbReference>
<dbReference type="PROSITE" id="PS00022">
    <property type="entry name" value="EGF_1"/>
    <property type="match status" value="6"/>
</dbReference>
<dbReference type="PROSITE" id="PS01186">
    <property type="entry name" value="EGF_2"/>
    <property type="match status" value="6"/>
</dbReference>
<dbReference type="PROSITE" id="PS50026">
    <property type="entry name" value="EGF_3"/>
    <property type="match status" value="4"/>
</dbReference>
<feature type="signal peptide" evidence="3">
    <location>
        <begin position="1"/>
        <end position="23"/>
    </location>
</feature>
<feature type="chain" id="PRO_0000407314" description="Scavenger receptor class F member 1">
    <location>
        <begin position="24"/>
        <end position="820"/>
    </location>
</feature>
<feature type="topological domain" description="Extracellular" evidence="3">
    <location>
        <begin position="24"/>
        <end position="422"/>
    </location>
</feature>
<feature type="transmembrane region" description="Helical" evidence="3">
    <location>
        <begin position="423"/>
        <end position="443"/>
    </location>
</feature>
<feature type="topological domain" description="Cytoplasmic" evidence="3">
    <location>
        <begin position="444"/>
        <end position="820"/>
    </location>
</feature>
<feature type="domain" description="EGF-like 1" evidence="4">
    <location>
        <begin position="56"/>
        <end position="90"/>
    </location>
</feature>
<feature type="domain" description="EGF-like 2" evidence="4">
    <location>
        <begin position="98"/>
        <end position="133"/>
    </location>
</feature>
<feature type="domain" description="EGF-like 3" evidence="4">
    <location>
        <begin position="163"/>
        <end position="193"/>
    </location>
</feature>
<feature type="domain" description="EGF-like 4" evidence="4">
    <location>
        <begin position="217"/>
        <end position="251"/>
    </location>
</feature>
<feature type="domain" description="EGF-like 5" evidence="4">
    <location>
        <begin position="304"/>
        <end position="341"/>
    </location>
</feature>
<feature type="domain" description="EGF-like 6" evidence="4">
    <location>
        <begin position="353"/>
        <end position="384"/>
    </location>
</feature>
<feature type="region of interest" description="Disordered" evidence="5">
    <location>
        <begin position="549"/>
        <end position="685"/>
    </location>
</feature>
<feature type="region of interest" description="Disordered" evidence="5">
    <location>
        <begin position="715"/>
        <end position="820"/>
    </location>
</feature>
<feature type="compositionally biased region" description="Acidic residues" evidence="5">
    <location>
        <begin position="631"/>
        <end position="648"/>
    </location>
</feature>
<feature type="compositionally biased region" description="Polar residues" evidence="5">
    <location>
        <begin position="650"/>
        <end position="662"/>
    </location>
</feature>
<feature type="modified residue" description="Phosphoserine" evidence="8">
    <location>
        <position position="590"/>
    </location>
</feature>
<feature type="modified residue" description="Phosphoserine" evidence="2">
    <location>
        <position position="607"/>
    </location>
</feature>
<feature type="glycosylation site" description="N-linked (GlcNAc...) asparagine" evidence="3">
    <location>
        <position position="291"/>
    </location>
</feature>
<feature type="disulfide bond" evidence="4">
    <location>
        <begin position="60"/>
        <end position="72"/>
    </location>
</feature>
<feature type="disulfide bond" evidence="4">
    <location>
        <begin position="66"/>
        <end position="78"/>
    </location>
</feature>
<feature type="disulfide bond" evidence="4">
    <location>
        <begin position="80"/>
        <end position="89"/>
    </location>
</feature>
<feature type="disulfide bond" evidence="4">
    <location>
        <begin position="102"/>
        <end position="114"/>
    </location>
</feature>
<feature type="disulfide bond" evidence="4">
    <location>
        <begin position="108"/>
        <end position="121"/>
    </location>
</feature>
<feature type="disulfide bond" evidence="4">
    <location>
        <begin position="123"/>
        <end position="132"/>
    </location>
</feature>
<feature type="disulfide bond" evidence="4">
    <location>
        <begin position="166"/>
        <end position="174"/>
    </location>
</feature>
<feature type="disulfide bond" evidence="4">
    <location>
        <begin position="168"/>
        <end position="181"/>
    </location>
</feature>
<feature type="disulfide bond" evidence="4">
    <location>
        <begin position="183"/>
        <end position="192"/>
    </location>
</feature>
<feature type="disulfide bond" evidence="4">
    <location>
        <begin position="221"/>
        <end position="232"/>
    </location>
</feature>
<feature type="disulfide bond" evidence="4">
    <location>
        <begin position="225"/>
        <end position="239"/>
    </location>
</feature>
<feature type="disulfide bond" evidence="4">
    <location>
        <begin position="241"/>
        <end position="250"/>
    </location>
</feature>
<feature type="sequence conflict" description="In Ref. 2; BAE21676." evidence="7" ref="2">
    <original>H</original>
    <variation>N</variation>
    <location>
        <position position="820"/>
    </location>
</feature>
<organism>
    <name type="scientific">Mus musculus</name>
    <name type="common">Mouse</name>
    <dbReference type="NCBI Taxonomy" id="10090"/>
    <lineage>
        <taxon>Eukaryota</taxon>
        <taxon>Metazoa</taxon>
        <taxon>Chordata</taxon>
        <taxon>Craniata</taxon>
        <taxon>Vertebrata</taxon>
        <taxon>Euteleostomi</taxon>
        <taxon>Mammalia</taxon>
        <taxon>Eutheria</taxon>
        <taxon>Euarchontoglires</taxon>
        <taxon>Glires</taxon>
        <taxon>Rodentia</taxon>
        <taxon>Myomorpha</taxon>
        <taxon>Muroidea</taxon>
        <taxon>Muridae</taxon>
        <taxon>Murinae</taxon>
        <taxon>Mus</taxon>
        <taxon>Mus</taxon>
    </lineage>
</organism>
<accession>Q5ND28</accession>
<accession>Q3V029</accession>
<accession>Q571H4</accession>
<sequence length="820" mass="87464">MLAAMGLELVFSLLLLWTQGTQGSTLDPAGQHVCKGSSPSELQCCPGWRQKDQECTIPICEGPDACRKEEVCVKPGLCRCKPGFFGAQCSSRCPGQYWGHDCRETCPCHPRGQCEPATGDCQCQPNYWGRLCEFPCTCGPHGQCDPKTGLCHCDPGWWSPTCRRPCQCNPASRCDQATGTCVCPPGWWGRRCSFSCNCHTSPCMQDSGRCVCLPGWWGPECSRKCQCVRGQCSVTSGHCSCPPGFHGIRCELPCNPGHYGAQCKESCGHCELNATCSPVTGNCESCKPGWNGTQCKQPCPAGTFGERCTGQCPRCRLGEPCQAETGHCQHCDPGWLGHRCENPCPLGTFGKGCSSTCPACAQGTCDAVTGECVCSAGYWGTSCNSSCPAGFHGNNCSMPCQCPEGLCHPVSGTCQLGRHGKNALIVGILVPLLLLLMGIVCCAYCCSGTRLDPKDRPERNGAAFFRMKQQVWGALTNLGSALPCGSLSNYKLPWVTVSHHDPEVPFNHSFIEPPSAGWASDDSFSSDPDSGEEDEAHAYFVPPREEMVPMAQEESPEASLPGGSFPPPEDASTPFPIPRTSSLARAKRPSVSFAEGTKFAPQNGRSSGDLSSPIRKPKRLSRGAQPRPEGQEAEESTGPEQVNTEEDAPTATSSGDPATSHGQLPPGSQMVAECAETTDGGIQESSGSVATIYMLAGTPQKPEGPVWSVFRRLGNYQKDQMDPKVKSAIPKPLRRSLGRNQASAGSAPGAVLSQAMESTAVRPEETPRGLGDGIESSGTVQEPDAGGSSLEQDSQKQAEEKEQEEPLYENVVPMSVPPQH</sequence>
<comment type="function">
    <text evidence="1 6">Mediates the binding and degradation of acetylated low density lipoprotein (Ac-LDL). Mediates heterophilic interactions, suggesting a function as adhesion protein (By similarity). Plays a role in the regulation of neurite-like outgrowth.</text>
</comment>
<comment type="subunit">
    <text evidence="1 6">Heterophilic interaction with SREC2 via its extracellular domain. The heterophilic interaction is suppressed by the presence of ligand such as Ac-LDL (By similarity). Interacts with AVIL; the interaction occurs in embryonic dorsal root ganglions at 18 dpc and induces neurite-like outgrowth.</text>
</comment>
<comment type="subcellular location">
    <subcellularLocation>
        <location evidence="7">Membrane</location>
        <topology evidence="7">Single-pass type I membrane protein</topology>
    </subcellularLocation>
</comment>
<comment type="tissue specificity">
    <text evidence="6">Expressed weakly in brain, spinal cord and dorsal root ganglions.</text>
</comment>
<comment type="developmental stage">
    <text evidence="6">Expressed strongly in brain, spinal cord and dorsal root ganglions at 18 dpc.</text>
</comment>
<comment type="domain">
    <text>The cytoplasmic domain is necessary for the regulation of neurite-like outgrowth.</text>
</comment>
<comment type="sequence caution" evidence="7">
    <conflict type="erroneous initiation">
        <sequence resource="EMBL-CDS" id="BAD90140"/>
    </conflict>
    <text>Extended N-terminus.</text>
</comment>
<proteinExistence type="evidence at protein level"/>
<reference key="1">
    <citation type="journal article" date="1995" name="DNA Res.">
        <title>Prediction of the coding sequences of unidentified human genes. IV. The coding sequences of 40 new genes (KIAA0121-KIAA0160) deduced by analysis of cDNA clones from human cell line KG-1.</title>
        <authorList>
            <person name="Nagase T."/>
            <person name="Seki N."/>
            <person name="Tanaka A."/>
            <person name="Ishikawa K."/>
            <person name="Nomura N."/>
        </authorList>
    </citation>
    <scope>NUCLEOTIDE SEQUENCE [LARGE SCALE MRNA]</scope>
    <source>
        <tissue>Bone marrow</tissue>
    </source>
</reference>
<reference key="2">
    <citation type="journal article" date="2005" name="Science">
        <title>The transcriptional landscape of the mammalian genome.</title>
        <authorList>
            <person name="Carninci P."/>
            <person name="Kasukawa T."/>
            <person name="Katayama S."/>
            <person name="Gough J."/>
            <person name="Frith M.C."/>
            <person name="Maeda N."/>
            <person name="Oyama R."/>
            <person name="Ravasi T."/>
            <person name="Lenhard B."/>
            <person name="Wells C."/>
            <person name="Kodzius R."/>
            <person name="Shimokawa K."/>
            <person name="Bajic V.B."/>
            <person name="Brenner S.E."/>
            <person name="Batalov S."/>
            <person name="Forrest A.R."/>
            <person name="Zavolan M."/>
            <person name="Davis M.J."/>
            <person name="Wilming L.G."/>
            <person name="Aidinis V."/>
            <person name="Allen J.E."/>
            <person name="Ambesi-Impiombato A."/>
            <person name="Apweiler R."/>
            <person name="Aturaliya R.N."/>
            <person name="Bailey T.L."/>
            <person name="Bansal M."/>
            <person name="Baxter L."/>
            <person name="Beisel K.W."/>
            <person name="Bersano T."/>
            <person name="Bono H."/>
            <person name="Chalk A.M."/>
            <person name="Chiu K.P."/>
            <person name="Choudhary V."/>
            <person name="Christoffels A."/>
            <person name="Clutterbuck D.R."/>
            <person name="Crowe M.L."/>
            <person name="Dalla E."/>
            <person name="Dalrymple B.P."/>
            <person name="de Bono B."/>
            <person name="Della Gatta G."/>
            <person name="di Bernardo D."/>
            <person name="Down T."/>
            <person name="Engstrom P."/>
            <person name="Fagiolini M."/>
            <person name="Faulkner G."/>
            <person name="Fletcher C.F."/>
            <person name="Fukushima T."/>
            <person name="Furuno M."/>
            <person name="Futaki S."/>
            <person name="Gariboldi M."/>
            <person name="Georgii-Hemming P."/>
            <person name="Gingeras T.R."/>
            <person name="Gojobori T."/>
            <person name="Green R.E."/>
            <person name="Gustincich S."/>
            <person name="Harbers M."/>
            <person name="Hayashi Y."/>
            <person name="Hensch T.K."/>
            <person name="Hirokawa N."/>
            <person name="Hill D."/>
            <person name="Huminiecki L."/>
            <person name="Iacono M."/>
            <person name="Ikeo K."/>
            <person name="Iwama A."/>
            <person name="Ishikawa T."/>
            <person name="Jakt M."/>
            <person name="Kanapin A."/>
            <person name="Katoh M."/>
            <person name="Kawasawa Y."/>
            <person name="Kelso J."/>
            <person name="Kitamura H."/>
            <person name="Kitano H."/>
            <person name="Kollias G."/>
            <person name="Krishnan S.P."/>
            <person name="Kruger A."/>
            <person name="Kummerfeld S.K."/>
            <person name="Kurochkin I.V."/>
            <person name="Lareau L.F."/>
            <person name="Lazarevic D."/>
            <person name="Lipovich L."/>
            <person name="Liu J."/>
            <person name="Liuni S."/>
            <person name="McWilliam S."/>
            <person name="Madan Babu M."/>
            <person name="Madera M."/>
            <person name="Marchionni L."/>
            <person name="Matsuda H."/>
            <person name="Matsuzawa S."/>
            <person name="Miki H."/>
            <person name="Mignone F."/>
            <person name="Miyake S."/>
            <person name="Morris K."/>
            <person name="Mottagui-Tabar S."/>
            <person name="Mulder N."/>
            <person name="Nakano N."/>
            <person name="Nakauchi H."/>
            <person name="Ng P."/>
            <person name="Nilsson R."/>
            <person name="Nishiguchi S."/>
            <person name="Nishikawa S."/>
            <person name="Nori F."/>
            <person name="Ohara O."/>
            <person name="Okazaki Y."/>
            <person name="Orlando V."/>
            <person name="Pang K.C."/>
            <person name="Pavan W.J."/>
            <person name="Pavesi G."/>
            <person name="Pesole G."/>
            <person name="Petrovsky N."/>
            <person name="Piazza S."/>
            <person name="Reed J."/>
            <person name="Reid J.F."/>
            <person name="Ring B.Z."/>
            <person name="Ringwald M."/>
            <person name="Rost B."/>
            <person name="Ruan Y."/>
            <person name="Salzberg S.L."/>
            <person name="Sandelin A."/>
            <person name="Schneider C."/>
            <person name="Schoenbach C."/>
            <person name="Sekiguchi K."/>
            <person name="Semple C.A."/>
            <person name="Seno S."/>
            <person name="Sessa L."/>
            <person name="Sheng Y."/>
            <person name="Shibata Y."/>
            <person name="Shimada H."/>
            <person name="Shimada K."/>
            <person name="Silva D."/>
            <person name="Sinclair B."/>
            <person name="Sperling S."/>
            <person name="Stupka E."/>
            <person name="Sugiura K."/>
            <person name="Sultana R."/>
            <person name="Takenaka Y."/>
            <person name="Taki K."/>
            <person name="Tammoja K."/>
            <person name="Tan S.L."/>
            <person name="Tang S."/>
            <person name="Taylor M.S."/>
            <person name="Tegner J."/>
            <person name="Teichmann S.A."/>
            <person name="Ueda H.R."/>
            <person name="van Nimwegen E."/>
            <person name="Verardo R."/>
            <person name="Wei C.L."/>
            <person name="Yagi K."/>
            <person name="Yamanishi H."/>
            <person name="Zabarovsky E."/>
            <person name="Zhu S."/>
            <person name="Zimmer A."/>
            <person name="Hide W."/>
            <person name="Bult C."/>
            <person name="Grimmond S.M."/>
            <person name="Teasdale R.D."/>
            <person name="Liu E.T."/>
            <person name="Brusic V."/>
            <person name="Quackenbush J."/>
            <person name="Wahlestedt C."/>
            <person name="Mattick J.S."/>
            <person name="Hume D.A."/>
            <person name="Kai C."/>
            <person name="Sasaki D."/>
            <person name="Tomaru Y."/>
            <person name="Fukuda S."/>
            <person name="Kanamori-Katayama M."/>
            <person name="Suzuki M."/>
            <person name="Aoki J."/>
            <person name="Arakawa T."/>
            <person name="Iida J."/>
            <person name="Imamura K."/>
            <person name="Itoh M."/>
            <person name="Kato T."/>
            <person name="Kawaji H."/>
            <person name="Kawagashira N."/>
            <person name="Kawashima T."/>
            <person name="Kojima M."/>
            <person name="Kondo S."/>
            <person name="Konno H."/>
            <person name="Nakano K."/>
            <person name="Ninomiya N."/>
            <person name="Nishio T."/>
            <person name="Okada M."/>
            <person name="Plessy C."/>
            <person name="Shibata K."/>
            <person name="Shiraki T."/>
            <person name="Suzuki S."/>
            <person name="Tagami M."/>
            <person name="Waki K."/>
            <person name="Watahiki A."/>
            <person name="Okamura-Oho Y."/>
            <person name="Suzuki H."/>
            <person name="Kawai J."/>
            <person name="Hayashizaki Y."/>
        </authorList>
    </citation>
    <scope>NUCLEOTIDE SEQUENCE [LARGE SCALE MRNA]</scope>
    <source>
        <strain>C57BL/6J</strain>
        <tissue>Ovary</tissue>
        <tissue>Uterus</tissue>
    </source>
</reference>
<reference key="3">
    <citation type="journal article" date="2009" name="PLoS Biol.">
        <title>Lineage-specific biology revealed by a finished genome assembly of the mouse.</title>
        <authorList>
            <person name="Church D.M."/>
            <person name="Goodstadt L."/>
            <person name="Hillier L.W."/>
            <person name="Zody M.C."/>
            <person name="Goldstein S."/>
            <person name="She X."/>
            <person name="Bult C.J."/>
            <person name="Agarwala R."/>
            <person name="Cherry J.L."/>
            <person name="DiCuccio M."/>
            <person name="Hlavina W."/>
            <person name="Kapustin Y."/>
            <person name="Meric P."/>
            <person name="Maglott D."/>
            <person name="Birtle Z."/>
            <person name="Marques A.C."/>
            <person name="Graves T."/>
            <person name="Zhou S."/>
            <person name="Teague B."/>
            <person name="Potamousis K."/>
            <person name="Churas C."/>
            <person name="Place M."/>
            <person name="Herschleb J."/>
            <person name="Runnheim R."/>
            <person name="Forrest D."/>
            <person name="Amos-Landgraf J."/>
            <person name="Schwartz D.C."/>
            <person name="Cheng Z."/>
            <person name="Lindblad-Toh K."/>
            <person name="Eichler E.E."/>
            <person name="Ponting C.P."/>
        </authorList>
    </citation>
    <scope>NUCLEOTIDE SEQUENCE [LARGE SCALE GENOMIC DNA]</scope>
    <source>
        <strain>C57BL/6J</strain>
    </source>
</reference>
<reference key="4">
    <citation type="journal article" date="2004" name="J. Biol. Chem.">
        <title>Type F scavenger receptor SREC-I interacts with advillin, a member of the gelsolin/villin family, and induces neurite-like outgrowth.</title>
        <authorList>
            <person name="Shibata M."/>
            <person name="Ishii J."/>
            <person name="Koizumi H."/>
            <person name="Shibata N."/>
            <person name="Dohmae N."/>
            <person name="Takio K."/>
            <person name="Adachi H."/>
            <person name="Tsujimoto M."/>
            <person name="Arai H."/>
        </authorList>
    </citation>
    <scope>FUNCTION</scope>
    <scope>INTERACTION WITH AVIL</scope>
    <scope>DEVELOPMENTAL STAGE</scope>
    <scope>TISSUE SPECIFICITY</scope>
</reference>
<reference key="5">
    <citation type="journal article" date="2009" name="Immunity">
        <title>The phagosomal proteome in interferon-gamma-activated macrophages.</title>
        <authorList>
            <person name="Trost M."/>
            <person name="English L."/>
            <person name="Lemieux S."/>
            <person name="Courcelles M."/>
            <person name="Desjardins M."/>
            <person name="Thibault P."/>
        </authorList>
    </citation>
    <scope>IDENTIFICATION BY MASS SPECTROMETRY [LARGE SCALE ANALYSIS]</scope>
</reference>
<reference key="6">
    <citation type="journal article" date="2010" name="Cell">
        <title>A tissue-specific atlas of mouse protein phosphorylation and expression.</title>
        <authorList>
            <person name="Huttlin E.L."/>
            <person name="Jedrychowski M.P."/>
            <person name="Elias J.E."/>
            <person name="Goswami T."/>
            <person name="Rad R."/>
            <person name="Beausoleil S.A."/>
            <person name="Villen J."/>
            <person name="Haas W."/>
            <person name="Sowa M.E."/>
            <person name="Gygi S.P."/>
        </authorList>
    </citation>
    <scope>PHOSPHORYLATION [LARGE SCALE ANALYSIS] AT SER-590</scope>
    <scope>IDENTIFICATION BY MASS SPECTROMETRY [LARGE SCALE ANALYSIS]</scope>
    <source>
        <tissue>Brown adipose tissue</tissue>
    </source>
</reference>